<reference key="1">
    <citation type="journal article" date="2005" name="Nucleic Acids Res.">
        <title>Genome dynamics and diversity of Shigella species, the etiologic agents of bacillary dysentery.</title>
        <authorList>
            <person name="Yang F."/>
            <person name="Yang J."/>
            <person name="Zhang X."/>
            <person name="Chen L."/>
            <person name="Jiang Y."/>
            <person name="Yan Y."/>
            <person name="Tang X."/>
            <person name="Wang J."/>
            <person name="Xiong Z."/>
            <person name="Dong J."/>
            <person name="Xue Y."/>
            <person name="Zhu Y."/>
            <person name="Xu X."/>
            <person name="Sun L."/>
            <person name="Chen S."/>
            <person name="Nie H."/>
            <person name="Peng J."/>
            <person name="Xu J."/>
            <person name="Wang Y."/>
            <person name="Yuan Z."/>
            <person name="Wen Y."/>
            <person name="Yao Z."/>
            <person name="Shen Y."/>
            <person name="Qiang B."/>
            <person name="Hou Y."/>
            <person name="Yu J."/>
            <person name="Jin Q."/>
        </authorList>
    </citation>
    <scope>NUCLEOTIDE SEQUENCE [LARGE SCALE GENOMIC DNA]</scope>
    <source>
        <strain>Sd197</strain>
    </source>
</reference>
<dbReference type="EC" id="3.1.-.-" evidence="1"/>
<dbReference type="EMBL" id="CP000034">
    <property type="protein sequence ID" value="ABB60794.1"/>
    <property type="molecule type" value="Genomic_DNA"/>
</dbReference>
<dbReference type="RefSeq" id="WP_000084456.1">
    <property type="nucleotide sequence ID" value="NC_007606.1"/>
</dbReference>
<dbReference type="RefSeq" id="YP_402283.1">
    <property type="nucleotide sequence ID" value="NC_007606.1"/>
</dbReference>
<dbReference type="SMR" id="Q32IR3"/>
<dbReference type="STRING" id="300267.SDY_0595"/>
<dbReference type="EnsemblBacteria" id="ABB60794">
    <property type="protein sequence ID" value="ABB60794"/>
    <property type="gene ID" value="SDY_0595"/>
</dbReference>
<dbReference type="KEGG" id="sdy:SDY_0595"/>
<dbReference type="PATRIC" id="fig|300267.13.peg.699"/>
<dbReference type="HOGENOM" id="CLU_106710_0_1_6"/>
<dbReference type="Proteomes" id="UP000002716">
    <property type="component" value="Chromosome"/>
</dbReference>
<dbReference type="GO" id="GO:0005737">
    <property type="term" value="C:cytoplasm"/>
    <property type="evidence" value="ECO:0007669"/>
    <property type="project" value="UniProtKB-SubCell"/>
</dbReference>
<dbReference type="GO" id="GO:0004222">
    <property type="term" value="F:metalloendopeptidase activity"/>
    <property type="evidence" value="ECO:0007669"/>
    <property type="project" value="InterPro"/>
</dbReference>
<dbReference type="GO" id="GO:0004521">
    <property type="term" value="F:RNA endonuclease activity"/>
    <property type="evidence" value="ECO:0007669"/>
    <property type="project" value="UniProtKB-UniRule"/>
</dbReference>
<dbReference type="GO" id="GO:0008270">
    <property type="term" value="F:zinc ion binding"/>
    <property type="evidence" value="ECO:0007669"/>
    <property type="project" value="UniProtKB-UniRule"/>
</dbReference>
<dbReference type="GO" id="GO:0006364">
    <property type="term" value="P:rRNA processing"/>
    <property type="evidence" value="ECO:0007669"/>
    <property type="project" value="UniProtKB-UniRule"/>
</dbReference>
<dbReference type="FunFam" id="3.40.390.30:FF:000001">
    <property type="entry name" value="Endoribonuclease YbeY"/>
    <property type="match status" value="1"/>
</dbReference>
<dbReference type="Gene3D" id="3.40.390.30">
    <property type="entry name" value="Metalloproteases ('zincins'), catalytic domain"/>
    <property type="match status" value="1"/>
</dbReference>
<dbReference type="HAMAP" id="MF_00009">
    <property type="entry name" value="Endoribonucl_YbeY"/>
    <property type="match status" value="1"/>
</dbReference>
<dbReference type="InterPro" id="IPR023091">
    <property type="entry name" value="MetalPrtase_cat_dom_sf_prd"/>
</dbReference>
<dbReference type="InterPro" id="IPR002036">
    <property type="entry name" value="YbeY"/>
</dbReference>
<dbReference type="InterPro" id="IPR020549">
    <property type="entry name" value="YbeY_CS"/>
</dbReference>
<dbReference type="NCBIfam" id="TIGR00043">
    <property type="entry name" value="rRNA maturation RNase YbeY"/>
    <property type="match status" value="1"/>
</dbReference>
<dbReference type="PANTHER" id="PTHR46986">
    <property type="entry name" value="ENDORIBONUCLEASE YBEY, CHLOROPLASTIC"/>
    <property type="match status" value="1"/>
</dbReference>
<dbReference type="PANTHER" id="PTHR46986:SF1">
    <property type="entry name" value="ENDORIBONUCLEASE YBEY, CHLOROPLASTIC"/>
    <property type="match status" value="1"/>
</dbReference>
<dbReference type="Pfam" id="PF02130">
    <property type="entry name" value="YbeY"/>
    <property type="match status" value="1"/>
</dbReference>
<dbReference type="SUPFAM" id="SSF55486">
    <property type="entry name" value="Metalloproteases ('zincins'), catalytic domain"/>
    <property type="match status" value="1"/>
</dbReference>
<dbReference type="PROSITE" id="PS01306">
    <property type="entry name" value="UPF0054"/>
    <property type="match status" value="1"/>
</dbReference>
<comment type="function">
    <text evidence="1">Single strand-specific metallo-endoribonuclease involved in late-stage 70S ribosome quality control and in maturation of the 3' terminus of the 16S rRNA.</text>
</comment>
<comment type="cofactor">
    <cofactor evidence="1">
        <name>Zn(2+)</name>
        <dbReference type="ChEBI" id="CHEBI:29105"/>
    </cofactor>
    <text evidence="1">Binds 1 zinc ion.</text>
</comment>
<comment type="subcellular location">
    <subcellularLocation>
        <location evidence="1">Cytoplasm</location>
    </subcellularLocation>
</comment>
<comment type="similarity">
    <text evidence="1">Belongs to the endoribonuclease YbeY family.</text>
</comment>
<proteinExistence type="inferred from homology"/>
<evidence type="ECO:0000255" key="1">
    <source>
        <dbReference type="HAMAP-Rule" id="MF_00009"/>
    </source>
</evidence>
<accession>Q32IR3</accession>
<feature type="chain" id="PRO_0000284311" description="Endoribonuclease YbeY">
    <location>
        <begin position="1"/>
        <end position="155"/>
    </location>
</feature>
<feature type="binding site" evidence="1">
    <location>
        <position position="114"/>
    </location>
    <ligand>
        <name>Zn(2+)</name>
        <dbReference type="ChEBI" id="CHEBI:29105"/>
        <note>catalytic</note>
    </ligand>
</feature>
<feature type="binding site" evidence="1">
    <location>
        <position position="118"/>
    </location>
    <ligand>
        <name>Zn(2+)</name>
        <dbReference type="ChEBI" id="CHEBI:29105"/>
        <note>catalytic</note>
    </ligand>
</feature>
<feature type="binding site" evidence="1">
    <location>
        <position position="124"/>
    </location>
    <ligand>
        <name>Zn(2+)</name>
        <dbReference type="ChEBI" id="CHEBI:29105"/>
        <note>catalytic</note>
    </ligand>
</feature>
<protein>
    <recommendedName>
        <fullName evidence="1">Endoribonuclease YbeY</fullName>
        <ecNumber evidence="1">3.1.-.-</ecNumber>
    </recommendedName>
</protein>
<keyword id="KW-0963">Cytoplasm</keyword>
<keyword id="KW-0255">Endonuclease</keyword>
<keyword id="KW-0378">Hydrolase</keyword>
<keyword id="KW-0479">Metal-binding</keyword>
<keyword id="KW-0540">Nuclease</keyword>
<keyword id="KW-1185">Reference proteome</keyword>
<keyword id="KW-0690">Ribosome biogenesis</keyword>
<keyword id="KW-0698">rRNA processing</keyword>
<keyword id="KW-0862">Zinc</keyword>
<name>YBEY_SHIDS</name>
<organism>
    <name type="scientific">Shigella dysenteriae serotype 1 (strain Sd197)</name>
    <dbReference type="NCBI Taxonomy" id="300267"/>
    <lineage>
        <taxon>Bacteria</taxon>
        <taxon>Pseudomonadati</taxon>
        <taxon>Pseudomonadota</taxon>
        <taxon>Gammaproteobacteria</taxon>
        <taxon>Enterobacterales</taxon>
        <taxon>Enterobacteriaceae</taxon>
        <taxon>Shigella</taxon>
    </lineage>
</organism>
<sequence>MSQVILDLQLACEDNSGLPEESQFQTWLNAVIPQFQEESEVTILVVDTAESHSLNLTYRGKDKPTNVLSFPFEVPPGMEMSLLGDLVICRQVVEKEAQEQGKPLEAHWAHMVVHGSLHLLGYDHIEDDEAEEMEALETEIMLALGYEDPYIAEKE</sequence>
<gene>
    <name evidence="1" type="primary">ybeY</name>
    <name type="ordered locus">SDY_0595</name>
</gene>